<gene>
    <name type="primary">TUB4</name>
    <name type="ORF">CC1G_05145</name>
</gene>
<organism>
    <name type="scientific">Coprinopsis cinerea (strain Okayama-7 / 130 / ATCC MYA-4618 / FGSC 9003)</name>
    <name type="common">Inky cap fungus</name>
    <name type="synonym">Hormographiella aspergillata</name>
    <dbReference type="NCBI Taxonomy" id="240176"/>
    <lineage>
        <taxon>Eukaryota</taxon>
        <taxon>Fungi</taxon>
        <taxon>Dikarya</taxon>
        <taxon>Basidiomycota</taxon>
        <taxon>Agaricomycotina</taxon>
        <taxon>Agaricomycetes</taxon>
        <taxon>Agaricomycetidae</taxon>
        <taxon>Agaricales</taxon>
        <taxon>Agaricineae</taxon>
        <taxon>Psathyrellaceae</taxon>
        <taxon>Coprinopsis</taxon>
    </lineage>
</organism>
<dbReference type="EMBL" id="AB111517">
    <property type="protein sequence ID" value="BAC77342.1"/>
    <property type="molecule type" value="Genomic_DNA"/>
</dbReference>
<dbReference type="EMBL" id="AACS02000002">
    <property type="protein sequence ID" value="EAU88379.2"/>
    <property type="molecule type" value="Genomic_DNA"/>
</dbReference>
<dbReference type="RefSeq" id="XP_001833445.2">
    <property type="nucleotide sequence ID" value="XM_001833393.2"/>
</dbReference>
<dbReference type="SMR" id="Q7Z9Z2"/>
<dbReference type="FunCoup" id="Q7Z9Z2">
    <property type="interactions" value="309"/>
</dbReference>
<dbReference type="STRING" id="240176.Q7Z9Z2"/>
<dbReference type="GeneID" id="6009941"/>
<dbReference type="KEGG" id="cci:CC1G_05145"/>
<dbReference type="VEuPathDB" id="FungiDB:CC1G_05145"/>
<dbReference type="eggNOG" id="KOG1374">
    <property type="taxonomic scope" value="Eukaryota"/>
</dbReference>
<dbReference type="HOGENOM" id="CLU_015718_1_0_1"/>
<dbReference type="InParanoid" id="Q7Z9Z2"/>
<dbReference type="OMA" id="HRYISIL"/>
<dbReference type="OrthoDB" id="10249382at2759"/>
<dbReference type="Proteomes" id="UP000001861">
    <property type="component" value="Unassembled WGS sequence"/>
</dbReference>
<dbReference type="GO" id="GO:0005737">
    <property type="term" value="C:cytoplasm"/>
    <property type="evidence" value="ECO:0007669"/>
    <property type="project" value="UniProtKB-KW"/>
</dbReference>
<dbReference type="GO" id="GO:0000930">
    <property type="term" value="C:gamma-tubulin complex"/>
    <property type="evidence" value="ECO:0007669"/>
    <property type="project" value="InterPro"/>
</dbReference>
<dbReference type="GO" id="GO:0005874">
    <property type="term" value="C:microtubule"/>
    <property type="evidence" value="ECO:0007669"/>
    <property type="project" value="UniProtKB-KW"/>
</dbReference>
<dbReference type="GO" id="GO:0005816">
    <property type="term" value="C:spindle pole body"/>
    <property type="evidence" value="ECO:0007669"/>
    <property type="project" value="UniProtKB-SubCell"/>
</dbReference>
<dbReference type="GO" id="GO:0005525">
    <property type="term" value="F:GTP binding"/>
    <property type="evidence" value="ECO:0007669"/>
    <property type="project" value="UniProtKB-KW"/>
</dbReference>
<dbReference type="GO" id="GO:0031122">
    <property type="term" value="P:cytoplasmic microtubule organization"/>
    <property type="evidence" value="ECO:0007669"/>
    <property type="project" value="InterPro"/>
</dbReference>
<dbReference type="GO" id="GO:0007020">
    <property type="term" value="P:microtubule nucleation"/>
    <property type="evidence" value="ECO:0007669"/>
    <property type="project" value="InterPro"/>
</dbReference>
<dbReference type="CDD" id="cd02188">
    <property type="entry name" value="gamma_tubulin"/>
    <property type="match status" value="1"/>
</dbReference>
<dbReference type="FunFam" id="1.10.287.600:FF:000004">
    <property type="entry name" value="Tubulin gamma chain"/>
    <property type="match status" value="1"/>
</dbReference>
<dbReference type="FunFam" id="3.30.1330.20:FF:000003">
    <property type="entry name" value="Tubulin gamma chain"/>
    <property type="match status" value="1"/>
</dbReference>
<dbReference type="FunFam" id="3.40.50.1440:FF:000012">
    <property type="entry name" value="Tubulin gamma chain"/>
    <property type="match status" value="1"/>
</dbReference>
<dbReference type="Gene3D" id="1.10.287.600">
    <property type="entry name" value="Helix hairpin bin"/>
    <property type="match status" value="1"/>
</dbReference>
<dbReference type="Gene3D" id="3.30.1330.20">
    <property type="entry name" value="Tubulin/FtsZ, C-terminal domain"/>
    <property type="match status" value="1"/>
</dbReference>
<dbReference type="Gene3D" id="3.40.50.1440">
    <property type="entry name" value="Tubulin/FtsZ, GTPase domain"/>
    <property type="match status" value="1"/>
</dbReference>
<dbReference type="InterPro" id="IPR002454">
    <property type="entry name" value="Gamma_tubulin"/>
</dbReference>
<dbReference type="InterPro" id="IPR008280">
    <property type="entry name" value="Tub_FtsZ_C"/>
</dbReference>
<dbReference type="InterPro" id="IPR000217">
    <property type="entry name" value="Tubulin"/>
</dbReference>
<dbReference type="InterPro" id="IPR037103">
    <property type="entry name" value="Tubulin/FtsZ-like_C"/>
</dbReference>
<dbReference type="InterPro" id="IPR018316">
    <property type="entry name" value="Tubulin/FtsZ_2-layer-sand-dom"/>
</dbReference>
<dbReference type="InterPro" id="IPR036525">
    <property type="entry name" value="Tubulin/FtsZ_GTPase_sf"/>
</dbReference>
<dbReference type="InterPro" id="IPR023123">
    <property type="entry name" value="Tubulin_C"/>
</dbReference>
<dbReference type="InterPro" id="IPR017975">
    <property type="entry name" value="Tubulin_CS"/>
</dbReference>
<dbReference type="InterPro" id="IPR003008">
    <property type="entry name" value="Tubulin_FtsZ_GTPase"/>
</dbReference>
<dbReference type="PANTHER" id="PTHR11588">
    <property type="entry name" value="TUBULIN"/>
    <property type="match status" value="1"/>
</dbReference>
<dbReference type="Pfam" id="PF00091">
    <property type="entry name" value="Tubulin"/>
    <property type="match status" value="1"/>
</dbReference>
<dbReference type="Pfam" id="PF03953">
    <property type="entry name" value="Tubulin_C"/>
    <property type="match status" value="1"/>
</dbReference>
<dbReference type="PRINTS" id="PR01164">
    <property type="entry name" value="GAMMATUBULIN"/>
</dbReference>
<dbReference type="PRINTS" id="PR01161">
    <property type="entry name" value="TUBULIN"/>
</dbReference>
<dbReference type="SMART" id="SM00864">
    <property type="entry name" value="Tubulin"/>
    <property type="match status" value="1"/>
</dbReference>
<dbReference type="SMART" id="SM00865">
    <property type="entry name" value="Tubulin_C"/>
    <property type="match status" value="1"/>
</dbReference>
<dbReference type="SUPFAM" id="SSF55307">
    <property type="entry name" value="Tubulin C-terminal domain-like"/>
    <property type="match status" value="1"/>
</dbReference>
<dbReference type="SUPFAM" id="SSF52490">
    <property type="entry name" value="Tubulin nucleotide-binding domain-like"/>
    <property type="match status" value="1"/>
</dbReference>
<dbReference type="PROSITE" id="PS00227">
    <property type="entry name" value="TUBULIN"/>
    <property type="match status" value="1"/>
</dbReference>
<evidence type="ECO:0000250" key="1"/>
<evidence type="ECO:0000255" key="2"/>
<evidence type="ECO:0000305" key="3"/>
<reference key="1">
    <citation type="submission" date="2003-06" db="EMBL/GenBank/DDBJ databases">
        <title>A gamma-tubulin gene in Coprinus cinereus.</title>
        <authorList>
            <person name="Kamada T."/>
        </authorList>
    </citation>
    <scope>NUCLEOTIDE SEQUENCE [GENOMIC DNA]</scope>
</reference>
<reference key="2">
    <citation type="journal article" date="2010" name="Proc. Natl. Acad. Sci. U.S.A.">
        <title>Insights into evolution of multicellular fungi from the assembled chromosomes of the mushroom Coprinopsis cinerea (Coprinus cinereus).</title>
        <authorList>
            <person name="Stajich J.E."/>
            <person name="Wilke S.K."/>
            <person name="Ahren D."/>
            <person name="Au C.H."/>
            <person name="Birren B.W."/>
            <person name="Borodovsky M."/>
            <person name="Burns C."/>
            <person name="Canbaeck B."/>
            <person name="Casselton L.A."/>
            <person name="Cheng C.K."/>
            <person name="Deng J."/>
            <person name="Dietrich F.S."/>
            <person name="Fargo D.C."/>
            <person name="Farman M.L."/>
            <person name="Gathman A.C."/>
            <person name="Goldberg J."/>
            <person name="Guigo R."/>
            <person name="Hoegger P.J."/>
            <person name="Hooker J.B."/>
            <person name="Huggins A."/>
            <person name="James T.Y."/>
            <person name="Kamada T."/>
            <person name="Kilaru S."/>
            <person name="Kodira C."/>
            <person name="Kuees U."/>
            <person name="Kupfer D."/>
            <person name="Kwan H.S."/>
            <person name="Lomsadze A."/>
            <person name="Li W."/>
            <person name="Lilly W.W."/>
            <person name="Ma L.-J."/>
            <person name="Mackey A.J."/>
            <person name="Manning G."/>
            <person name="Martin F."/>
            <person name="Muraguchi H."/>
            <person name="Natvig D.O."/>
            <person name="Palmerini H."/>
            <person name="Ramesh M.A."/>
            <person name="Rehmeyer C.J."/>
            <person name="Roe B.A."/>
            <person name="Shenoy N."/>
            <person name="Stanke M."/>
            <person name="Ter-Hovhannisyan V."/>
            <person name="Tunlid A."/>
            <person name="Velagapudi R."/>
            <person name="Vision T.J."/>
            <person name="Zeng Q."/>
            <person name="Zolan M.E."/>
            <person name="Pukkila P.J."/>
        </authorList>
    </citation>
    <scope>NUCLEOTIDE SEQUENCE [LARGE SCALE GENOMIC DNA]</scope>
    <source>
        <strain>Okayama-7 / 130 / ATCC MYA-4618 / FGSC 9003</strain>
    </source>
</reference>
<proteinExistence type="inferred from homology"/>
<protein>
    <recommendedName>
        <fullName>Tubulin gamma chain</fullName>
    </recommendedName>
    <alternativeName>
        <fullName>Gamma-tubulin</fullName>
    </alternativeName>
</protein>
<name>TBG_COPC7</name>
<sequence length="453" mass="50692">MPREIVTVQLGQCGNQMGAVYWQRLCAEHGISSEGILEEWATEGGDRKDVFFYQADDEHYIPRAILVDLEPRVINNILASPYANLYNPENIFVSKDGGGAGNNWAQGYSAGERIYEDIMEMIDREAEGSDSLEGFMVMHSIAGGTGSGLGSFLLERLNDKFPKKLIQTYSVFPNAQEGDVVVQPYNSLLALKRLVNHADSVVVLDNGALARISADRLHVQTPSFDQTNQLVSTVIAASTQTLRYPGYMNNDLVGIIASLIPTPRCHFLMTSYTPFTSDQIDKAKTIRRTTVLDVMRRLLQPKNRMVLTTPSKTACYISILNIIQGEVDPTDVHQSLLRIRERQLANFIPWGPASIQVALTKRSPYVTTNHRVSGLMLANHTSVASLFKRMLDQFDRLRKRNAFIEQYKKEKMFANGLEEFDDARATCDELLKEYKACESPDYVSFGGPDGDQS</sequence>
<comment type="function">
    <text evidence="1">Tubulin is the major constituent of microtubules. The gamma chain is found at microtubule organizing centers (MTOC) such as the spindle poles or the centrosome, suggesting that it is involved in the minus-end nucleation of microtubule assembly (By similarity).</text>
</comment>
<comment type="subcellular location">
    <subcellularLocation>
        <location evidence="3">Cytoplasm</location>
        <location evidence="3">Cytoskeleton</location>
        <location evidence="3">Microtubule organizing center</location>
        <location evidence="3">Spindle pole body</location>
    </subcellularLocation>
</comment>
<comment type="similarity">
    <text evidence="3">Belongs to the tubulin family.</text>
</comment>
<accession>Q7Z9Z2</accession>
<accession>A8NG06</accession>
<keyword id="KW-0963">Cytoplasm</keyword>
<keyword id="KW-0206">Cytoskeleton</keyword>
<keyword id="KW-0342">GTP-binding</keyword>
<keyword id="KW-0493">Microtubule</keyword>
<keyword id="KW-0547">Nucleotide-binding</keyword>
<keyword id="KW-1185">Reference proteome</keyword>
<feature type="chain" id="PRO_0000048453" description="Tubulin gamma chain">
    <location>
        <begin position="1"/>
        <end position="453"/>
    </location>
</feature>
<feature type="binding site" evidence="2">
    <location>
        <begin position="142"/>
        <end position="148"/>
    </location>
    <ligand>
        <name>GTP</name>
        <dbReference type="ChEBI" id="CHEBI:37565"/>
    </ligand>
</feature>